<gene>
    <name type="primary">Cgl3</name>
    <name type="ORF">CC1G_00723</name>
</gene>
<feature type="chain" id="PRO_0000333264" description="Galectin-3">
    <location>
        <begin position="1"/>
        <end position="164"/>
    </location>
</feature>
<feature type="domain" description="Galectin" evidence="2">
    <location>
        <begin position="9"/>
        <end position="154"/>
    </location>
</feature>
<feature type="binding site" evidence="1">
    <location>
        <position position="60"/>
    </location>
    <ligand>
        <name>a carbohydrate</name>
        <dbReference type="ChEBI" id="CHEBI:16646"/>
    </ligand>
</feature>
<feature type="binding site" evidence="1">
    <location>
        <position position="64"/>
    </location>
    <ligand>
        <name>a carbohydrate</name>
        <dbReference type="ChEBI" id="CHEBI:16646"/>
    </ligand>
</feature>
<feature type="binding site" evidence="1">
    <location>
        <position position="73"/>
    </location>
    <ligand>
        <name>a carbohydrate</name>
        <dbReference type="ChEBI" id="CHEBI:16646"/>
    </ligand>
</feature>
<feature type="binding site" evidence="1">
    <location>
        <position position="84"/>
    </location>
    <ligand>
        <name>a carbohydrate</name>
        <dbReference type="ChEBI" id="CHEBI:16646"/>
    </ligand>
</feature>
<comment type="function">
    <text evidence="1">Binds lactose. May play a role in fruiting body formation (By similarity).</text>
</comment>
<comment type="subunit">
    <text evidence="1">Homotetramer. Oligomerization is required for carbohydrate binding.</text>
</comment>
<comment type="subcellular location">
    <subcellularLocation>
        <location evidence="1">Secreted</location>
        <location evidence="1">Extracellular space</location>
        <location evidence="1">Extracellular matrix</location>
    </subcellularLocation>
    <subcellularLocation>
        <location evidence="1">Secreted</location>
        <location evidence="1">Cell wall</location>
    </subcellularLocation>
</comment>
<comment type="induction">
    <text evidence="1">Induced during fruiting body formation.</text>
</comment>
<dbReference type="EMBL" id="AACS02000001">
    <property type="protein sequence ID" value="EAU92504.1"/>
    <property type="molecule type" value="Genomic_DNA"/>
</dbReference>
<dbReference type="RefSeq" id="XP_001829544.1">
    <property type="nucleotide sequence ID" value="XM_001829492.2"/>
</dbReference>
<dbReference type="SMR" id="A8N3G7"/>
<dbReference type="STRING" id="240176.A8N3G7"/>
<dbReference type="GeneID" id="6005975"/>
<dbReference type="KEGG" id="cci:CC1G_00723"/>
<dbReference type="VEuPathDB" id="FungiDB:CC1G_00723"/>
<dbReference type="eggNOG" id="ENOG502SSSF">
    <property type="taxonomic scope" value="Eukaryota"/>
</dbReference>
<dbReference type="HOGENOM" id="CLU_117277_0_0_1"/>
<dbReference type="InParanoid" id="A8N3G7"/>
<dbReference type="OMA" id="YDCKENI"/>
<dbReference type="OrthoDB" id="3018764at2759"/>
<dbReference type="Proteomes" id="UP000001861">
    <property type="component" value="Unassembled WGS sequence"/>
</dbReference>
<dbReference type="GO" id="GO:0005576">
    <property type="term" value="C:extracellular region"/>
    <property type="evidence" value="ECO:0007669"/>
    <property type="project" value="UniProtKB-KW"/>
</dbReference>
<dbReference type="GO" id="GO:0030246">
    <property type="term" value="F:carbohydrate binding"/>
    <property type="evidence" value="ECO:0007669"/>
    <property type="project" value="UniProtKB-KW"/>
</dbReference>
<dbReference type="Gene3D" id="2.60.120.200">
    <property type="match status" value="1"/>
</dbReference>
<dbReference type="InterPro" id="IPR013320">
    <property type="entry name" value="ConA-like_dom_sf"/>
</dbReference>
<dbReference type="InterPro" id="IPR001079">
    <property type="entry name" value="Galectin_CRD"/>
</dbReference>
<dbReference type="Pfam" id="PF00337">
    <property type="entry name" value="Gal-bind_lectin"/>
    <property type="match status" value="1"/>
</dbReference>
<dbReference type="SUPFAM" id="SSF49899">
    <property type="entry name" value="Concanavalin A-like lectins/glucanases"/>
    <property type="match status" value="1"/>
</dbReference>
<dbReference type="PROSITE" id="PS51304">
    <property type="entry name" value="GALECTIN"/>
    <property type="match status" value="1"/>
</dbReference>
<organism>
    <name type="scientific">Coprinopsis cinerea (strain Okayama-7 / 130 / ATCC MYA-4618 / FGSC 9003)</name>
    <name type="common">Inky cap fungus</name>
    <name type="synonym">Hormographiella aspergillata</name>
    <dbReference type="NCBI Taxonomy" id="240176"/>
    <lineage>
        <taxon>Eukaryota</taxon>
        <taxon>Fungi</taxon>
        <taxon>Dikarya</taxon>
        <taxon>Basidiomycota</taxon>
        <taxon>Agaricomycotina</taxon>
        <taxon>Agaricomycetes</taxon>
        <taxon>Agaricomycetidae</taxon>
        <taxon>Agaricales</taxon>
        <taxon>Agaricineae</taxon>
        <taxon>Psathyrellaceae</taxon>
        <taxon>Coprinopsis</taxon>
    </lineage>
</organism>
<sequence length="164" mass="18721">MFHILRLESTVDLSEPLKDNGIIVFQSDKLDLEPSPNLGPTGIDNTNVNLINAKGDVLLHIGIRRRENAFVFNSIPYGESRGPEERIPLEGTFGDRRDPSITVFDHPDRYQIMIDYKTVYYYKKRLEGRCEKVSYKINEGQTPPFSDVLGVTVLYFANVMPRAN</sequence>
<reference key="1">
    <citation type="journal article" date="2010" name="Proc. Natl. Acad. Sci. U.S.A.">
        <title>Insights into evolution of multicellular fungi from the assembled chromosomes of the mushroom Coprinopsis cinerea (Coprinus cinereus).</title>
        <authorList>
            <person name="Stajich J.E."/>
            <person name="Wilke S.K."/>
            <person name="Ahren D."/>
            <person name="Au C.H."/>
            <person name="Birren B.W."/>
            <person name="Borodovsky M."/>
            <person name="Burns C."/>
            <person name="Canbaeck B."/>
            <person name="Casselton L.A."/>
            <person name="Cheng C.K."/>
            <person name="Deng J."/>
            <person name="Dietrich F.S."/>
            <person name="Fargo D.C."/>
            <person name="Farman M.L."/>
            <person name="Gathman A.C."/>
            <person name="Goldberg J."/>
            <person name="Guigo R."/>
            <person name="Hoegger P.J."/>
            <person name="Hooker J.B."/>
            <person name="Huggins A."/>
            <person name="James T.Y."/>
            <person name="Kamada T."/>
            <person name="Kilaru S."/>
            <person name="Kodira C."/>
            <person name="Kuees U."/>
            <person name="Kupfer D."/>
            <person name="Kwan H.S."/>
            <person name="Lomsadze A."/>
            <person name="Li W."/>
            <person name="Lilly W.W."/>
            <person name="Ma L.-J."/>
            <person name="Mackey A.J."/>
            <person name="Manning G."/>
            <person name="Martin F."/>
            <person name="Muraguchi H."/>
            <person name="Natvig D.O."/>
            <person name="Palmerini H."/>
            <person name="Ramesh M.A."/>
            <person name="Rehmeyer C.J."/>
            <person name="Roe B.A."/>
            <person name="Shenoy N."/>
            <person name="Stanke M."/>
            <person name="Ter-Hovhannisyan V."/>
            <person name="Tunlid A."/>
            <person name="Velagapudi R."/>
            <person name="Vision T.J."/>
            <person name="Zeng Q."/>
            <person name="Zolan M.E."/>
            <person name="Pukkila P.J."/>
        </authorList>
    </citation>
    <scope>NUCLEOTIDE SEQUENCE [LARGE SCALE GENOMIC DNA]</scope>
    <source>
        <strain>Okayama-7 / 130 / ATCC MYA-4618 / FGSC 9003</strain>
    </source>
</reference>
<protein>
    <recommendedName>
        <fullName>Galectin-3</fullName>
    </recommendedName>
    <alternativeName>
        <fullName>Cgl-III</fullName>
    </alternativeName>
    <alternativeName>
        <fullName>Galectin III</fullName>
    </alternativeName>
</protein>
<proteinExistence type="inferred from homology"/>
<accession>A8N3G7</accession>
<evidence type="ECO:0000250" key="1"/>
<evidence type="ECO:0000255" key="2">
    <source>
        <dbReference type="PROSITE-ProRule" id="PRU00639"/>
    </source>
</evidence>
<name>CGL3_COPC7</name>
<keyword id="KW-0134">Cell wall</keyword>
<keyword id="KW-0272">Extracellular matrix</keyword>
<keyword id="KW-0293">Fruiting body</keyword>
<keyword id="KW-0430">Lectin</keyword>
<keyword id="KW-1185">Reference proteome</keyword>
<keyword id="KW-0964">Secreted</keyword>